<sequence length="482" mass="52177">MKFTTYTTFPEQTSNESLWILVDSEQLQSNLNTYQINNLESILTATQFKANFNETLPLFGQLSTQPHSQLLGLGKAAELQAAKLAKLAQTIIKSAQNKFKHIAIDIAALPVEYHYLFALSLTQAAYGYDEFKSKKNEFVLQQVDLISSQTSLDENQLALVHAVQSGQSYARDLGNRPGNICFPEYLAEQALALAAEFPDLLKVTVLNEQQMADLGMYAFLAVSKGSERPGRIVTLEYQAQLEQAPVVLVGKGVTFDTGGISLKPGLGMDEMKFDMCGAASVLGTIRALCEARLPIHVVGAIAAAENMPSGKATRPGDIVTTMSGQTVEILNTDAEGRLVLCDTLTYIKRFNPAVVIDIATLTGACVVALGKVLSGLFSPDDTLAAELQQAGEQSFDRVWRMPVIDDYQELLDSPFADIANIGGPHGGAITAACFLERFTRDYRWAHLDVAGTAWLSGSAKGATGRPVPLLMQFLANRVSTNG</sequence>
<name>AMPA_ACIB5</name>
<reference key="1">
    <citation type="journal article" date="2008" name="J. Bacteriol.">
        <title>Comparative genome sequence analysis of multidrug-resistant Acinetobacter baumannii.</title>
        <authorList>
            <person name="Adams M.D."/>
            <person name="Goglin K."/>
            <person name="Molyneaux N."/>
            <person name="Hujer K.M."/>
            <person name="Lavender H."/>
            <person name="Jamison J.J."/>
            <person name="MacDonald I.J."/>
            <person name="Martin K.M."/>
            <person name="Russo T."/>
            <person name="Campagnari A.A."/>
            <person name="Hujer A.M."/>
            <person name="Bonomo R.A."/>
            <person name="Gill S.R."/>
        </authorList>
    </citation>
    <scope>NUCLEOTIDE SEQUENCE [LARGE SCALE GENOMIC DNA]</scope>
    <source>
        <strain>AB0057</strain>
    </source>
</reference>
<feature type="chain" id="PRO_1000118443" description="Probable cytosol aminopeptidase">
    <location>
        <begin position="1"/>
        <end position="482"/>
    </location>
</feature>
<feature type="active site" evidence="1">
    <location>
        <position position="263"/>
    </location>
</feature>
<feature type="active site" evidence="1">
    <location>
        <position position="337"/>
    </location>
</feature>
<feature type="binding site" evidence="1">
    <location>
        <position position="251"/>
    </location>
    <ligand>
        <name>Mn(2+)</name>
        <dbReference type="ChEBI" id="CHEBI:29035"/>
        <label>2</label>
    </ligand>
</feature>
<feature type="binding site" evidence="1">
    <location>
        <position position="256"/>
    </location>
    <ligand>
        <name>Mn(2+)</name>
        <dbReference type="ChEBI" id="CHEBI:29035"/>
        <label>1</label>
    </ligand>
</feature>
<feature type="binding site" evidence="1">
    <location>
        <position position="256"/>
    </location>
    <ligand>
        <name>Mn(2+)</name>
        <dbReference type="ChEBI" id="CHEBI:29035"/>
        <label>2</label>
    </ligand>
</feature>
<feature type="binding site" evidence="1">
    <location>
        <position position="274"/>
    </location>
    <ligand>
        <name>Mn(2+)</name>
        <dbReference type="ChEBI" id="CHEBI:29035"/>
        <label>2</label>
    </ligand>
</feature>
<feature type="binding site" evidence="1">
    <location>
        <position position="333"/>
    </location>
    <ligand>
        <name>Mn(2+)</name>
        <dbReference type="ChEBI" id="CHEBI:29035"/>
        <label>1</label>
    </ligand>
</feature>
<feature type="binding site" evidence="1">
    <location>
        <position position="335"/>
    </location>
    <ligand>
        <name>Mn(2+)</name>
        <dbReference type="ChEBI" id="CHEBI:29035"/>
        <label>1</label>
    </ligand>
</feature>
<feature type="binding site" evidence="1">
    <location>
        <position position="335"/>
    </location>
    <ligand>
        <name>Mn(2+)</name>
        <dbReference type="ChEBI" id="CHEBI:29035"/>
        <label>2</label>
    </ligand>
</feature>
<evidence type="ECO:0000255" key="1">
    <source>
        <dbReference type="HAMAP-Rule" id="MF_00181"/>
    </source>
</evidence>
<proteinExistence type="inferred from homology"/>
<gene>
    <name evidence="1" type="primary">pepA</name>
    <name type="ordered locus">AB57_0318</name>
</gene>
<comment type="function">
    <text evidence="1">Presumably involved in the processing and regular turnover of intracellular proteins. Catalyzes the removal of unsubstituted N-terminal amino acids from various peptides.</text>
</comment>
<comment type="catalytic activity">
    <reaction evidence="1">
        <text>Release of an N-terminal amino acid, Xaa-|-Yaa-, in which Xaa is preferably Leu, but may be other amino acids including Pro although not Arg or Lys, and Yaa may be Pro. Amino acid amides and methyl esters are also readily hydrolyzed, but rates on arylamides are exceedingly low.</text>
        <dbReference type="EC" id="3.4.11.1"/>
    </reaction>
</comment>
<comment type="catalytic activity">
    <reaction evidence="1">
        <text>Release of an N-terminal amino acid, preferentially leucine, but not glutamic or aspartic acids.</text>
        <dbReference type="EC" id="3.4.11.10"/>
    </reaction>
</comment>
<comment type="cofactor">
    <cofactor evidence="1">
        <name>Mn(2+)</name>
        <dbReference type="ChEBI" id="CHEBI:29035"/>
    </cofactor>
    <text evidence="1">Binds 2 manganese ions per subunit.</text>
</comment>
<comment type="subcellular location">
    <subcellularLocation>
        <location evidence="1">Cytoplasm</location>
    </subcellularLocation>
</comment>
<comment type="similarity">
    <text evidence="1">Belongs to the peptidase M17 family.</text>
</comment>
<protein>
    <recommendedName>
        <fullName evidence="1">Probable cytosol aminopeptidase</fullName>
        <ecNumber evidence="1">3.4.11.1</ecNumber>
    </recommendedName>
    <alternativeName>
        <fullName evidence="1">Leucine aminopeptidase</fullName>
        <shortName evidence="1">LAP</shortName>
        <ecNumber evidence="1">3.4.11.10</ecNumber>
    </alternativeName>
    <alternativeName>
        <fullName evidence="1">Leucyl aminopeptidase</fullName>
    </alternativeName>
</protein>
<dbReference type="EC" id="3.4.11.1" evidence="1"/>
<dbReference type="EC" id="3.4.11.10" evidence="1"/>
<dbReference type="EMBL" id="CP001182">
    <property type="protein sequence ID" value="ACJ39744.1"/>
    <property type="molecule type" value="Genomic_DNA"/>
</dbReference>
<dbReference type="RefSeq" id="WP_000673449.1">
    <property type="nucleotide sequence ID" value="NC_011586.2"/>
</dbReference>
<dbReference type="SMR" id="B7I309"/>
<dbReference type="MEROPS" id="M17.003"/>
<dbReference type="KEGG" id="abn:AB57_0318"/>
<dbReference type="HOGENOM" id="CLU_013734_2_2_6"/>
<dbReference type="Proteomes" id="UP000007094">
    <property type="component" value="Chromosome"/>
</dbReference>
<dbReference type="GO" id="GO:0005737">
    <property type="term" value="C:cytoplasm"/>
    <property type="evidence" value="ECO:0007669"/>
    <property type="project" value="UniProtKB-SubCell"/>
</dbReference>
<dbReference type="GO" id="GO:0030145">
    <property type="term" value="F:manganese ion binding"/>
    <property type="evidence" value="ECO:0007669"/>
    <property type="project" value="UniProtKB-UniRule"/>
</dbReference>
<dbReference type="GO" id="GO:0070006">
    <property type="term" value="F:metalloaminopeptidase activity"/>
    <property type="evidence" value="ECO:0007669"/>
    <property type="project" value="InterPro"/>
</dbReference>
<dbReference type="GO" id="GO:0006508">
    <property type="term" value="P:proteolysis"/>
    <property type="evidence" value="ECO:0007669"/>
    <property type="project" value="UniProtKB-KW"/>
</dbReference>
<dbReference type="CDD" id="cd00433">
    <property type="entry name" value="Peptidase_M17"/>
    <property type="match status" value="1"/>
</dbReference>
<dbReference type="FunFam" id="3.40.630.10:FF:000004">
    <property type="entry name" value="Probable cytosol aminopeptidase"/>
    <property type="match status" value="1"/>
</dbReference>
<dbReference type="Gene3D" id="3.40.220.10">
    <property type="entry name" value="Leucine Aminopeptidase, subunit E, domain 1"/>
    <property type="match status" value="1"/>
</dbReference>
<dbReference type="Gene3D" id="3.40.630.10">
    <property type="entry name" value="Zn peptidases"/>
    <property type="match status" value="1"/>
</dbReference>
<dbReference type="HAMAP" id="MF_00181">
    <property type="entry name" value="Cytosol_peptidase_M17"/>
    <property type="match status" value="1"/>
</dbReference>
<dbReference type="InterPro" id="IPR011356">
    <property type="entry name" value="Leucine_aapep/pepB"/>
</dbReference>
<dbReference type="InterPro" id="IPR043472">
    <property type="entry name" value="Macro_dom-like"/>
</dbReference>
<dbReference type="InterPro" id="IPR000819">
    <property type="entry name" value="Peptidase_M17_C"/>
</dbReference>
<dbReference type="InterPro" id="IPR023042">
    <property type="entry name" value="Peptidase_M17_leu_NH2_pept"/>
</dbReference>
<dbReference type="InterPro" id="IPR008283">
    <property type="entry name" value="Peptidase_M17_N"/>
</dbReference>
<dbReference type="NCBIfam" id="NF002074">
    <property type="entry name" value="PRK00913.1-4"/>
    <property type="match status" value="1"/>
</dbReference>
<dbReference type="PANTHER" id="PTHR11963:SF23">
    <property type="entry name" value="CYTOSOL AMINOPEPTIDASE"/>
    <property type="match status" value="1"/>
</dbReference>
<dbReference type="PANTHER" id="PTHR11963">
    <property type="entry name" value="LEUCINE AMINOPEPTIDASE-RELATED"/>
    <property type="match status" value="1"/>
</dbReference>
<dbReference type="Pfam" id="PF00883">
    <property type="entry name" value="Peptidase_M17"/>
    <property type="match status" value="1"/>
</dbReference>
<dbReference type="Pfam" id="PF02789">
    <property type="entry name" value="Peptidase_M17_N"/>
    <property type="match status" value="1"/>
</dbReference>
<dbReference type="PRINTS" id="PR00481">
    <property type="entry name" value="LAMNOPPTDASE"/>
</dbReference>
<dbReference type="SUPFAM" id="SSF52949">
    <property type="entry name" value="Macro domain-like"/>
    <property type="match status" value="1"/>
</dbReference>
<dbReference type="SUPFAM" id="SSF53187">
    <property type="entry name" value="Zn-dependent exopeptidases"/>
    <property type="match status" value="1"/>
</dbReference>
<dbReference type="PROSITE" id="PS00631">
    <property type="entry name" value="CYTOSOL_AP"/>
    <property type="match status" value="1"/>
</dbReference>
<accession>B7I309</accession>
<keyword id="KW-0031">Aminopeptidase</keyword>
<keyword id="KW-0963">Cytoplasm</keyword>
<keyword id="KW-0378">Hydrolase</keyword>
<keyword id="KW-0464">Manganese</keyword>
<keyword id="KW-0479">Metal-binding</keyword>
<keyword id="KW-0645">Protease</keyword>
<organism>
    <name type="scientific">Acinetobacter baumannii (strain AB0057)</name>
    <dbReference type="NCBI Taxonomy" id="480119"/>
    <lineage>
        <taxon>Bacteria</taxon>
        <taxon>Pseudomonadati</taxon>
        <taxon>Pseudomonadota</taxon>
        <taxon>Gammaproteobacteria</taxon>
        <taxon>Moraxellales</taxon>
        <taxon>Moraxellaceae</taxon>
        <taxon>Acinetobacter</taxon>
        <taxon>Acinetobacter calcoaceticus/baumannii complex</taxon>
    </lineage>
</organism>